<evidence type="ECO:0000250" key="1"/>
<evidence type="ECO:0000250" key="2">
    <source>
        <dbReference type="UniProtKB" id="Q63537"/>
    </source>
</evidence>
<evidence type="ECO:0000250" key="3">
    <source>
        <dbReference type="UniProtKB" id="Q92777"/>
    </source>
</evidence>
<evidence type="ECO:0000256" key="4">
    <source>
        <dbReference type="SAM" id="MobiDB-lite"/>
    </source>
</evidence>
<evidence type="ECO:0000269" key="5">
    <source>
    </source>
</evidence>
<evidence type="ECO:0000269" key="6">
    <source>
    </source>
</evidence>
<evidence type="ECO:0000303" key="7">
    <source ref="1"/>
</evidence>
<evidence type="ECO:0000305" key="8"/>
<evidence type="ECO:0007744" key="9">
    <source>
    </source>
</evidence>
<dbReference type="EMBL" id="AF096867">
    <property type="protein sequence ID" value="AAC72966.1"/>
    <property type="molecule type" value="mRNA"/>
</dbReference>
<dbReference type="EMBL" id="L32026">
    <property type="protein sequence ID" value="AAA79964.1"/>
    <property type="molecule type" value="Genomic_DNA"/>
</dbReference>
<dbReference type="EMBL" id="BC066004">
    <property type="protein sequence ID" value="AAH66004.1"/>
    <property type="molecule type" value="mRNA"/>
</dbReference>
<dbReference type="EMBL" id="BC085129">
    <property type="protein sequence ID" value="AAH85129.1"/>
    <property type="molecule type" value="mRNA"/>
</dbReference>
<dbReference type="CCDS" id="CCDS51874.1">
    <molecule id="Q64332-1"/>
</dbReference>
<dbReference type="CCDS" id="CCDS51875.1">
    <molecule id="Q64332-2"/>
</dbReference>
<dbReference type="PIR" id="I61260">
    <property type="entry name" value="I61260"/>
</dbReference>
<dbReference type="RefSeq" id="NP_001104485.1">
    <molecule id="Q64332-1"/>
    <property type="nucleotide sequence ID" value="NM_001111015.1"/>
</dbReference>
<dbReference type="RefSeq" id="NP_038709.1">
    <molecule id="Q64332-2"/>
    <property type="nucleotide sequence ID" value="NM_013681.3"/>
</dbReference>
<dbReference type="SMR" id="Q64332"/>
<dbReference type="BioGRID" id="203601">
    <property type="interactions" value="19"/>
</dbReference>
<dbReference type="CORUM" id="Q64332"/>
<dbReference type="FunCoup" id="Q64332">
    <property type="interactions" value="638"/>
</dbReference>
<dbReference type="IntAct" id="Q64332">
    <property type="interactions" value="8"/>
</dbReference>
<dbReference type="STRING" id="10090.ENSMUSP00000009538"/>
<dbReference type="GlyGen" id="Q64332">
    <property type="glycosylation" value="10 sites, 1 N-linked glycan (1 site), 1 O-linked glycan (8 sites)"/>
</dbReference>
<dbReference type="iPTMnet" id="Q64332"/>
<dbReference type="PhosphoSitePlus" id="Q64332"/>
<dbReference type="SwissPalm" id="Q64332"/>
<dbReference type="PaxDb" id="10090-ENSMUSP00000009538"/>
<dbReference type="PeptideAtlas" id="Q64332"/>
<dbReference type="ProteomicsDB" id="263175">
    <molecule id="Q64332-1"/>
</dbReference>
<dbReference type="ProteomicsDB" id="263176">
    <molecule id="Q64332-2"/>
</dbReference>
<dbReference type="ABCD" id="Q64332">
    <property type="antibodies" value="1 sequenced antibody"/>
</dbReference>
<dbReference type="Antibodypedia" id="4054">
    <property type="antibodies" value="140 antibodies from 29 providers"/>
</dbReference>
<dbReference type="DNASU" id="20965"/>
<dbReference type="Ensembl" id="ENSMUST00000009538.12">
    <molecule id="Q64332-1"/>
    <property type="protein sequence ID" value="ENSMUSP00000009538.6"/>
    <property type="gene ID" value="ENSMUSG00000009394.14"/>
</dbReference>
<dbReference type="Ensembl" id="ENSMUST00000169345.4">
    <molecule id="Q64332-2"/>
    <property type="protein sequence ID" value="ENSMUSP00000133121.2"/>
    <property type="gene ID" value="ENSMUSG00000009394.14"/>
</dbReference>
<dbReference type="Ensembl" id="ENSMUST00000203450.2">
    <molecule id="Q64332-2"/>
    <property type="protein sequence ID" value="ENSMUSP00000144921.2"/>
    <property type="gene ID" value="ENSMUSG00000009394.14"/>
</dbReference>
<dbReference type="GeneID" id="20965"/>
<dbReference type="KEGG" id="mmu:20965"/>
<dbReference type="UCSC" id="uc009dim.3">
    <molecule id="Q64332-2"/>
    <property type="organism name" value="mouse"/>
</dbReference>
<dbReference type="UCSC" id="uc009din.2">
    <molecule id="Q64332-1"/>
    <property type="organism name" value="mouse"/>
</dbReference>
<dbReference type="AGR" id="MGI:103020"/>
<dbReference type="CTD" id="6854"/>
<dbReference type="MGI" id="MGI:103020">
    <property type="gene designation" value="Syn2"/>
</dbReference>
<dbReference type="VEuPathDB" id="HostDB:ENSMUSG00000009394"/>
<dbReference type="eggNOG" id="KOG3895">
    <property type="taxonomic scope" value="Eukaryota"/>
</dbReference>
<dbReference type="GeneTree" id="ENSGT00940000156062"/>
<dbReference type="HOGENOM" id="CLU_010582_3_0_1"/>
<dbReference type="InParanoid" id="Q64332"/>
<dbReference type="OMA" id="CCEIFGG"/>
<dbReference type="OrthoDB" id="10249572at2759"/>
<dbReference type="PhylomeDB" id="Q64332"/>
<dbReference type="TreeFam" id="TF319919"/>
<dbReference type="Reactome" id="R-MMU-181429">
    <property type="pathway name" value="Serotonin Neurotransmitter Release Cycle"/>
</dbReference>
<dbReference type="Reactome" id="R-MMU-212676">
    <property type="pathway name" value="Dopamine Neurotransmitter Release Cycle"/>
</dbReference>
<dbReference type="BioGRID-ORCS" id="20965">
    <property type="hits" value="2 hits in 76 CRISPR screens"/>
</dbReference>
<dbReference type="CD-CODE" id="CE726F99">
    <property type="entry name" value="Postsynaptic density"/>
</dbReference>
<dbReference type="ChiTaRS" id="Syn2">
    <property type="organism name" value="mouse"/>
</dbReference>
<dbReference type="PRO" id="PR:Q64332"/>
<dbReference type="Proteomes" id="UP000000589">
    <property type="component" value="Chromosome 6"/>
</dbReference>
<dbReference type="RNAct" id="Q64332">
    <property type="molecule type" value="protein"/>
</dbReference>
<dbReference type="Bgee" id="ENSMUSG00000009394">
    <property type="expression patterns" value="Expressed in subiculum and 172 other cell types or tissues"/>
</dbReference>
<dbReference type="GO" id="GO:0098978">
    <property type="term" value="C:glutamatergic synapse"/>
    <property type="evidence" value="ECO:0000314"/>
    <property type="project" value="MGI"/>
</dbReference>
<dbReference type="GO" id="GO:0043209">
    <property type="term" value="C:myelin sheath"/>
    <property type="evidence" value="ECO:0007005"/>
    <property type="project" value="UniProtKB"/>
</dbReference>
<dbReference type="GO" id="GO:0005886">
    <property type="term" value="C:plasma membrane"/>
    <property type="evidence" value="ECO:0000314"/>
    <property type="project" value="MGI"/>
</dbReference>
<dbReference type="GO" id="GO:0014069">
    <property type="term" value="C:postsynaptic density"/>
    <property type="evidence" value="ECO:0000314"/>
    <property type="project" value="MGI"/>
</dbReference>
<dbReference type="GO" id="GO:0098685">
    <property type="term" value="C:Schaffer collateral - CA1 synapse"/>
    <property type="evidence" value="ECO:0000314"/>
    <property type="project" value="SynGO"/>
</dbReference>
<dbReference type="GO" id="GO:0031201">
    <property type="term" value="C:SNARE complex"/>
    <property type="evidence" value="ECO:0000314"/>
    <property type="project" value="MGI"/>
</dbReference>
<dbReference type="GO" id="GO:0045202">
    <property type="term" value="C:synapse"/>
    <property type="evidence" value="ECO:0000314"/>
    <property type="project" value="MGI"/>
</dbReference>
<dbReference type="GO" id="GO:0030672">
    <property type="term" value="C:synaptic vesicle membrane"/>
    <property type="evidence" value="ECO:0000314"/>
    <property type="project" value="MGI"/>
</dbReference>
<dbReference type="GO" id="GO:0005524">
    <property type="term" value="F:ATP binding"/>
    <property type="evidence" value="ECO:0007669"/>
    <property type="project" value="InterPro"/>
</dbReference>
<dbReference type="GO" id="GO:0042802">
    <property type="term" value="F:identical protein binding"/>
    <property type="evidence" value="ECO:0000353"/>
    <property type="project" value="MGI"/>
</dbReference>
<dbReference type="GO" id="GO:0017156">
    <property type="term" value="P:calcium-ion regulated exocytosis"/>
    <property type="evidence" value="ECO:0000315"/>
    <property type="project" value="UniProtKB"/>
</dbReference>
<dbReference type="GO" id="GO:0007269">
    <property type="term" value="P:neurotransmitter secretion"/>
    <property type="evidence" value="ECO:0000315"/>
    <property type="project" value="MGI"/>
</dbReference>
<dbReference type="GO" id="GO:0097091">
    <property type="term" value="P:synaptic vesicle clustering"/>
    <property type="evidence" value="ECO:0000314"/>
    <property type="project" value="SynGO"/>
</dbReference>
<dbReference type="GO" id="GO:0099504">
    <property type="term" value="P:synaptic vesicle cycle"/>
    <property type="evidence" value="ECO:0000314"/>
    <property type="project" value="SynGO"/>
</dbReference>
<dbReference type="FunFam" id="3.30.1490.20:FF:000008">
    <property type="entry name" value="Synapsin I"/>
    <property type="match status" value="1"/>
</dbReference>
<dbReference type="FunFam" id="3.40.50.20:FF:000008">
    <property type="entry name" value="Synapsin III"/>
    <property type="match status" value="1"/>
</dbReference>
<dbReference type="FunFam" id="3.30.470.20:FF:000151">
    <property type="entry name" value="Synapsin-2"/>
    <property type="match status" value="1"/>
</dbReference>
<dbReference type="Gene3D" id="3.40.50.20">
    <property type="match status" value="1"/>
</dbReference>
<dbReference type="Gene3D" id="3.30.1490.20">
    <property type="entry name" value="ATP-grasp fold, A domain"/>
    <property type="match status" value="1"/>
</dbReference>
<dbReference type="Gene3D" id="3.30.470.20">
    <property type="entry name" value="ATP-grasp fold, B domain"/>
    <property type="match status" value="1"/>
</dbReference>
<dbReference type="InterPro" id="IPR013815">
    <property type="entry name" value="ATP_grasp_subdomain_1"/>
</dbReference>
<dbReference type="InterPro" id="IPR016185">
    <property type="entry name" value="PreATP-grasp_dom_sf"/>
</dbReference>
<dbReference type="InterPro" id="IPR001359">
    <property type="entry name" value="Synapsin"/>
</dbReference>
<dbReference type="InterPro" id="IPR020898">
    <property type="entry name" value="Synapsin_ATP-bd_dom"/>
</dbReference>
<dbReference type="InterPro" id="IPR019735">
    <property type="entry name" value="Synapsin_CS"/>
</dbReference>
<dbReference type="InterPro" id="IPR019736">
    <property type="entry name" value="Synapsin_P_site"/>
</dbReference>
<dbReference type="InterPro" id="IPR020897">
    <property type="entry name" value="Synapsin_pre-ATP-grasp_dom"/>
</dbReference>
<dbReference type="PANTHER" id="PTHR10841">
    <property type="entry name" value="SYNAPSIN"/>
    <property type="match status" value="1"/>
</dbReference>
<dbReference type="PANTHER" id="PTHR10841:SF20">
    <property type="entry name" value="SYNAPSIN-2"/>
    <property type="match status" value="1"/>
</dbReference>
<dbReference type="Pfam" id="PF02078">
    <property type="entry name" value="Synapsin"/>
    <property type="match status" value="1"/>
</dbReference>
<dbReference type="Pfam" id="PF02750">
    <property type="entry name" value="Synapsin_C"/>
    <property type="match status" value="1"/>
</dbReference>
<dbReference type="Pfam" id="PF10581">
    <property type="entry name" value="Synapsin_N"/>
    <property type="match status" value="1"/>
</dbReference>
<dbReference type="PRINTS" id="PR01368">
    <property type="entry name" value="SYNAPSIN"/>
</dbReference>
<dbReference type="SUPFAM" id="SSF56059">
    <property type="entry name" value="Glutathione synthetase ATP-binding domain-like"/>
    <property type="match status" value="1"/>
</dbReference>
<dbReference type="SUPFAM" id="SSF52440">
    <property type="entry name" value="PreATP-grasp domain"/>
    <property type="match status" value="1"/>
</dbReference>
<dbReference type="PROSITE" id="PS00415">
    <property type="entry name" value="SYNAPSIN_1"/>
    <property type="match status" value="1"/>
</dbReference>
<dbReference type="PROSITE" id="PS00416">
    <property type="entry name" value="SYNAPSIN_2"/>
    <property type="match status" value="1"/>
</dbReference>
<accession>Q64332</accession>
<accession>Q6NZR0</accession>
<accession>Q9QWV7</accession>
<name>SYN2_MOUSE</name>
<feature type="chain" id="PRO_0000183022" description="Synapsin-2">
    <location>
        <begin position="1"/>
        <end position="586"/>
    </location>
</feature>
<feature type="region of interest" description="A">
    <location>
        <begin position="1"/>
        <end position="29"/>
    </location>
</feature>
<feature type="region of interest" description="Disordered" evidence="4">
    <location>
        <begin position="20"/>
        <end position="84"/>
    </location>
</feature>
<feature type="region of interest" description="B; linker">
    <location>
        <begin position="33"/>
        <end position="113"/>
    </location>
</feature>
<feature type="region of interest" description="C; actin-binding and synaptic-vesicle binding">
    <location>
        <begin position="114"/>
        <end position="421"/>
    </location>
</feature>
<feature type="region of interest" description="Disordered" evidence="4">
    <location>
        <begin position="421"/>
        <end position="549"/>
    </location>
</feature>
<feature type="region of interest" description="G; Pro-rich linker">
    <location>
        <begin position="422"/>
        <end position="458"/>
    </location>
</feature>
<feature type="region of interest" description="H; Pro/Ser-rich linker">
    <location>
        <begin position="459"/>
        <end position="537"/>
    </location>
</feature>
<feature type="region of interest" description="E">
    <location>
        <begin position="538"/>
        <end position="586"/>
    </location>
</feature>
<feature type="compositionally biased region" description="Low complexity" evidence="4">
    <location>
        <begin position="40"/>
        <end position="55"/>
    </location>
</feature>
<feature type="compositionally biased region" description="Pro residues" evidence="4">
    <location>
        <begin position="61"/>
        <end position="77"/>
    </location>
</feature>
<feature type="compositionally biased region" description="Polar residues" evidence="4">
    <location>
        <begin position="421"/>
        <end position="440"/>
    </location>
</feature>
<feature type="compositionally biased region" description="Low complexity" evidence="4">
    <location>
        <begin position="463"/>
        <end position="507"/>
    </location>
</feature>
<feature type="compositionally biased region" description="Polar residues" evidence="4">
    <location>
        <begin position="508"/>
        <end position="522"/>
    </location>
</feature>
<feature type="compositionally biased region" description="Low complexity" evidence="4">
    <location>
        <begin position="524"/>
        <end position="535"/>
    </location>
</feature>
<feature type="modified residue" description="Phosphoserine; by PKA and CaMK1" evidence="2">
    <location>
        <position position="10"/>
    </location>
</feature>
<feature type="modified residue" description="Phosphothreonine" evidence="9">
    <location>
        <position position="422"/>
    </location>
</feature>
<feature type="modified residue" description="Phosphoserine" evidence="5 9">
    <location>
        <position position="426"/>
    </location>
</feature>
<feature type="splice variant" id="VSP_015203" description="In isoform IIb." evidence="7">
    <original>GPGQPQGMQPPGKVLPPRRLP</original>
    <variation>CLQYILDCNGIAVGPKQVQAS</variation>
    <location>
        <begin position="459"/>
        <end position="479"/>
    </location>
</feature>
<feature type="splice variant" id="VSP_015204" description="In isoform IIb." evidence="7">
    <location>
        <begin position="480"/>
        <end position="586"/>
    </location>
</feature>
<organism>
    <name type="scientific">Mus musculus</name>
    <name type="common">Mouse</name>
    <dbReference type="NCBI Taxonomy" id="10090"/>
    <lineage>
        <taxon>Eukaryota</taxon>
        <taxon>Metazoa</taxon>
        <taxon>Chordata</taxon>
        <taxon>Craniata</taxon>
        <taxon>Vertebrata</taxon>
        <taxon>Euteleostomi</taxon>
        <taxon>Mammalia</taxon>
        <taxon>Eutheria</taxon>
        <taxon>Euarchontoglires</taxon>
        <taxon>Glires</taxon>
        <taxon>Rodentia</taxon>
        <taxon>Myomorpha</taxon>
        <taxon>Muroidea</taxon>
        <taxon>Muridae</taxon>
        <taxon>Murinae</taxon>
        <taxon>Mus</taxon>
        <taxon>Mus</taxon>
    </lineage>
</organism>
<gene>
    <name type="primary">Syn2</name>
</gene>
<sequence>MMNFLRRRLSDSSFIANLPNGYMTDLQRPEPQQPPPAPGPGAATASAATSAASPGPERRPPPAQAPAPQPAPQPAPTPSVGSSFFSSLSQAVKQTAASAGLVDAPAPSAASRKAKVLLVVDEPHTDWAKCFRGKKILGDYDIKVEQAEFSELNLVAHADGTYAVDMQVLRNGTKVVRSFRPDFVLIRQHAFGMAENEDFRHLVIGMQYAGLPSINSLESIYNFCDKPWVFAQMVAIFKTLGGEKFPLIEQTYYPNHREMLTLPTFPVVVKIGHAHSGMGKVKVENHYDFQDIASVVALTQTYATAEPFIDAKYDIRVQKIGNNYKAYMRTSISGNWKTNTGSAMLEQIAMSDRYKLWVDACSEMFGGLDICAVKAVHGKDGKDYIFEVMDCSMPLIGEHQVEDRQLITDLVISKMNQLLSRTPALSPQRPLTTQQPQSGTLKEPDSSKTPPQRPPPQGGPGQPQGMQPPGKVLPPRRLPSGPSLPSSSSSSSSSSSSSSAPQRPGGPTTTHGDASSSSNSLAEAQAPQAAPAQKPQPHPQLNKSQSLTNAFSFSESSFFRSSANEDEAKAETIRSLRKSFASLFSD</sequence>
<reference key="1">
    <citation type="submission" date="1998-10" db="EMBL/GenBank/DDBJ databases">
        <title>Identification of mouse synapsin IIb.</title>
        <authorList>
            <person name="Han S.J."/>
        </authorList>
    </citation>
    <scope>NUCLEOTIDE SEQUENCE [MRNA] (ISOFORM IIB)</scope>
    <source>
        <strain>H129</strain>
        <tissue>Brain</tissue>
    </source>
</reference>
<reference key="2">
    <citation type="journal article" date="1994" name="J. Biol. Chem.">
        <title>Neuron-specific expression of the synapsin II gene is directed by a specific core promoter and upstream regulatory elements.</title>
        <authorList>
            <person name="Chin L.S."/>
            <person name="Li L."/>
            <person name="Greengard P."/>
        </authorList>
    </citation>
    <scope>NUCLEOTIDE SEQUENCE [GENOMIC DNA] OF 1-126</scope>
    <scope>TISSUE SPECIFICITY</scope>
    <source>
        <strain>129/Sv</strain>
    </source>
</reference>
<reference key="3">
    <citation type="journal article" date="2004" name="Genome Res.">
        <title>The status, quality, and expansion of the NIH full-length cDNA project: the Mammalian Gene Collection (MGC).</title>
        <authorList>
            <consortium name="The MGC Project Team"/>
        </authorList>
    </citation>
    <scope>NUCLEOTIDE SEQUENCE [LARGE SCALE MRNA] OF 2-586 (ISOFORM IIA)</scope>
    <source>
        <strain>C57BL/6J</strain>
        <tissue>Brain</tissue>
    </source>
</reference>
<reference key="4">
    <citation type="submission" date="2009-01" db="UniProtKB">
        <authorList>
            <person name="Lubec G."/>
            <person name="Klug S."/>
            <person name="Kang S.U."/>
            <person name="Sunyer B."/>
            <person name="Chen W.-Q."/>
        </authorList>
    </citation>
    <scope>PROTEIN SEQUENCE OF 59-112; 116-129; 136-143; 178-213; 245-270; 338-353 AND 405-414</scope>
    <scope>IDENTIFICATION BY MASS SPECTROMETRY</scope>
    <source>
        <strain>C57BL/6J</strain>
        <strain>OF1</strain>
        <tissue>Brain</tissue>
        <tissue>Hippocampus</tissue>
    </source>
</reference>
<reference key="5">
    <citation type="journal article" date="2010" name="Cell">
        <title>A tissue-specific atlas of mouse protein phosphorylation and expression.</title>
        <authorList>
            <person name="Huttlin E.L."/>
            <person name="Jedrychowski M.P."/>
            <person name="Elias J.E."/>
            <person name="Goswami T."/>
            <person name="Rad R."/>
            <person name="Beausoleil S.A."/>
            <person name="Villen J."/>
            <person name="Haas W."/>
            <person name="Sowa M.E."/>
            <person name="Gygi S.P."/>
        </authorList>
    </citation>
    <scope>PHOSPHORYLATION [LARGE SCALE ANALYSIS] AT THR-422 AND SER-426</scope>
    <scope>IDENTIFICATION BY MASS SPECTROMETRY [LARGE SCALE ANALYSIS]</scope>
    <source>
        <tissue>Brain</tissue>
        <tissue>Brown adipose tissue</tissue>
        <tissue>Liver</tissue>
    </source>
</reference>
<reference key="6">
    <citation type="journal article" date="2012" name="FEBS Lett.">
        <title>Short-chain fatty acid receptor GPR41-mediated activation of sympathetic neurons involves synapsin 2b phosphorylation.</title>
        <authorList>
            <person name="Inoue D."/>
            <person name="Kimura I."/>
            <person name="Wakabayashi M."/>
            <person name="Tsumoto H."/>
            <person name="Ozawa K."/>
            <person name="Hara T."/>
            <person name="Takei Y."/>
            <person name="Hirasawa A."/>
            <person name="Ishihama Y."/>
            <person name="Tsujimoto G."/>
        </authorList>
    </citation>
    <scope>FUNCTION</scope>
    <scope>PHOSPHORYLATION AT SER-426</scope>
    <scope>TISSUE SPECIFICITY (ISOFORM IIB)</scope>
</reference>
<comment type="function">
    <text evidence="5">Neuronal phosphoprotein that coats synaptic vesicles, binds to the cytoskeleton, and is believed to function in the regulation of neurotransmitter release. May play a role in noradrenaline secretion by sympathetic neurons.</text>
</comment>
<comment type="subunit">
    <text evidence="2 3">Can form oligomers with SYN1 (By similarity). Interacts with CAPON.</text>
</comment>
<comment type="subcellular location">
    <subcellularLocation>
        <location>Synapse</location>
    </subcellularLocation>
</comment>
<comment type="alternative products">
    <event type="alternative splicing"/>
    <isoform>
        <id>Q64332-1</id>
        <name>IIa</name>
        <sequence type="displayed"/>
    </isoform>
    <isoform>
        <id>Q64332-2</id>
        <name>IIb</name>
        <sequence type="described" ref="VSP_015203 VSP_015204"/>
    </isoform>
</comment>
<comment type="tissue specificity">
    <text evidence="6">Expressed exclusively in neuronal cells. Isoform IIb is enriched in sympathetic cervical ganglion.</text>
</comment>
<comment type="domain">
    <text evidence="1">The A region binds phospholipids with a preference for negatively charged species.</text>
</comment>
<comment type="PTM">
    <text evidence="1 5">Phosphorylation at Ser-10 dissociates synapsins from synaptic vesicles (By similarity). Phosphorylation at Ser-426 by MAPK1/ERK2 and/or MAPK3/ERK1 may play a role in noradrenaline secretion by sympathetic neurons.</text>
</comment>
<comment type="similarity">
    <text evidence="8">Belongs to the synapsin family.</text>
</comment>
<protein>
    <recommendedName>
        <fullName>Synapsin-2</fullName>
    </recommendedName>
    <alternativeName>
        <fullName>Synapsin II</fullName>
    </alternativeName>
</protein>
<proteinExistence type="evidence at protein level"/>
<keyword id="KW-0025">Alternative splicing</keyword>
<keyword id="KW-0903">Direct protein sequencing</keyword>
<keyword id="KW-0597">Phosphoprotein</keyword>
<keyword id="KW-1185">Reference proteome</keyword>
<keyword id="KW-0770">Synapse</keyword>